<proteinExistence type="evidence at protein level"/>
<evidence type="ECO:0000250" key="1"/>
<evidence type="ECO:0000250" key="2">
    <source>
        <dbReference type="UniProtKB" id="P02470"/>
    </source>
</evidence>
<evidence type="ECO:0000250" key="3">
    <source>
        <dbReference type="UniProtKB" id="P02489"/>
    </source>
</evidence>
<evidence type="ECO:0000255" key="4">
    <source>
        <dbReference type="PROSITE-ProRule" id="PRU00285"/>
    </source>
</evidence>
<evidence type="ECO:0000256" key="5">
    <source>
        <dbReference type="SAM" id="MobiDB-lite"/>
    </source>
</evidence>
<evidence type="ECO:0000269" key="6">
    <source>
    </source>
</evidence>
<gene>
    <name type="primary">CRYAA</name>
</gene>
<reference key="1">
    <citation type="journal article" date="1977" name="Biochim. Biophys. Acta">
        <title>Primary structures of alpha-crystallin A chains of elephant, whale, hyrax and rhinoceros.</title>
        <authorList>
            <person name="de Jong W.W."/>
            <person name="Nuy-Terwindt E.C."/>
            <person name="Versteeg M."/>
        </authorList>
    </citation>
    <scope>PARTIAL PROTEIN SEQUENCE</scope>
    <scope>ACETYLATION AT MET-1</scope>
</reference>
<dbReference type="PIR" id="A02881">
    <property type="entry name" value="CYRNAA"/>
</dbReference>
<dbReference type="SMR" id="P02479"/>
<dbReference type="GlyCosmos" id="P02479">
    <property type="glycosylation" value="1 site, No reported glycans"/>
</dbReference>
<dbReference type="iPTMnet" id="P02479"/>
<dbReference type="GO" id="GO:0005737">
    <property type="term" value="C:cytoplasm"/>
    <property type="evidence" value="ECO:0000250"/>
    <property type="project" value="UniProtKB"/>
</dbReference>
<dbReference type="GO" id="GO:0005634">
    <property type="term" value="C:nucleus"/>
    <property type="evidence" value="ECO:0000250"/>
    <property type="project" value="UniProtKB"/>
</dbReference>
<dbReference type="GO" id="GO:0046872">
    <property type="term" value="F:metal ion binding"/>
    <property type="evidence" value="ECO:0007669"/>
    <property type="project" value="UniProtKB-KW"/>
</dbReference>
<dbReference type="GO" id="GO:0005212">
    <property type="term" value="F:structural constituent of eye lens"/>
    <property type="evidence" value="ECO:0007669"/>
    <property type="project" value="UniProtKB-KW"/>
</dbReference>
<dbReference type="GO" id="GO:0051082">
    <property type="term" value="F:unfolded protein binding"/>
    <property type="evidence" value="ECO:0007669"/>
    <property type="project" value="TreeGrafter"/>
</dbReference>
<dbReference type="GO" id="GO:0002088">
    <property type="term" value="P:lens development in camera-type eye"/>
    <property type="evidence" value="ECO:0007669"/>
    <property type="project" value="TreeGrafter"/>
</dbReference>
<dbReference type="GO" id="GO:0043066">
    <property type="term" value="P:negative regulation of apoptotic process"/>
    <property type="evidence" value="ECO:0007669"/>
    <property type="project" value="TreeGrafter"/>
</dbReference>
<dbReference type="GO" id="GO:0042026">
    <property type="term" value="P:protein refolding"/>
    <property type="evidence" value="ECO:0007669"/>
    <property type="project" value="TreeGrafter"/>
</dbReference>
<dbReference type="GO" id="GO:0009408">
    <property type="term" value="P:response to heat"/>
    <property type="evidence" value="ECO:0007669"/>
    <property type="project" value="TreeGrafter"/>
</dbReference>
<dbReference type="FunFam" id="2.60.40.790:FF:000008">
    <property type="entry name" value="Alpha-crystallin A chain"/>
    <property type="match status" value="1"/>
</dbReference>
<dbReference type="Gene3D" id="2.60.40.790">
    <property type="match status" value="1"/>
</dbReference>
<dbReference type="InterPro" id="IPR002068">
    <property type="entry name" value="A-crystallin/Hsp20_dom"/>
</dbReference>
<dbReference type="InterPro" id="IPR055269">
    <property type="entry name" value="Alpha-crystallin/HSP_16"/>
</dbReference>
<dbReference type="InterPro" id="IPR001436">
    <property type="entry name" value="Alpha-crystallin/sHSP_animal"/>
</dbReference>
<dbReference type="InterPro" id="IPR003090">
    <property type="entry name" value="Alpha-crystallin_N"/>
</dbReference>
<dbReference type="InterPro" id="IPR008978">
    <property type="entry name" value="HSP20-like_chaperone"/>
</dbReference>
<dbReference type="PANTHER" id="PTHR45640:SF14">
    <property type="entry name" value="ALPHA-CRYSTALLIN A CHAIN"/>
    <property type="match status" value="1"/>
</dbReference>
<dbReference type="PANTHER" id="PTHR45640">
    <property type="entry name" value="HEAT SHOCK PROTEIN HSP-12.2-RELATED"/>
    <property type="match status" value="1"/>
</dbReference>
<dbReference type="Pfam" id="PF00525">
    <property type="entry name" value="Crystallin"/>
    <property type="match status" value="1"/>
</dbReference>
<dbReference type="Pfam" id="PF00011">
    <property type="entry name" value="HSP20"/>
    <property type="match status" value="1"/>
</dbReference>
<dbReference type="PIRSF" id="PIRSF036514">
    <property type="entry name" value="Sm_HSP_B1"/>
    <property type="match status" value="1"/>
</dbReference>
<dbReference type="PRINTS" id="PR00299">
    <property type="entry name" value="ACRYSTALLIN"/>
</dbReference>
<dbReference type="SUPFAM" id="SSF49764">
    <property type="entry name" value="HSP20-like chaperones"/>
    <property type="match status" value="1"/>
</dbReference>
<dbReference type="PROSITE" id="PS01031">
    <property type="entry name" value="SHSP"/>
    <property type="match status" value="1"/>
</dbReference>
<keyword id="KW-0007">Acetylation</keyword>
<keyword id="KW-0143">Chaperone</keyword>
<keyword id="KW-0963">Cytoplasm</keyword>
<keyword id="KW-0903">Direct protein sequencing</keyword>
<keyword id="KW-0273">Eye lens protein</keyword>
<keyword id="KW-0325">Glycoprotein</keyword>
<keyword id="KW-0479">Metal-binding</keyword>
<keyword id="KW-0488">Methylation</keyword>
<keyword id="KW-0539">Nucleus</keyword>
<keyword id="KW-0597">Phosphoprotein</keyword>
<keyword id="KW-0862">Zinc</keyword>
<protein>
    <recommendedName>
        <fullName>Alpha-crystallin A chain</fullName>
    </recommendedName>
</protein>
<name>CRYAA_CERSI</name>
<feature type="chain" id="PRO_0000125853" description="Alpha-crystallin A chain">
    <location>
        <begin position="1"/>
        <end position="173"/>
    </location>
</feature>
<feature type="domain" description="sHSP" evidence="4">
    <location>
        <begin position="52"/>
        <end position="162"/>
    </location>
</feature>
<feature type="region of interest" description="Required for complex formation with BFSP1 and BFSP2" evidence="3">
    <location>
        <begin position="1"/>
        <end position="63"/>
    </location>
</feature>
<feature type="region of interest" description="Disordered" evidence="5">
    <location>
        <begin position="144"/>
        <end position="173"/>
    </location>
</feature>
<feature type="compositionally biased region" description="Basic and acidic residues" evidence="5">
    <location>
        <begin position="153"/>
        <end position="167"/>
    </location>
</feature>
<feature type="binding site" evidence="2">
    <location>
        <position position="100"/>
    </location>
    <ligand>
        <name>Zn(2+)</name>
        <dbReference type="ChEBI" id="CHEBI:29105"/>
        <label>1</label>
    </ligand>
</feature>
<feature type="binding site" evidence="2">
    <location>
        <position position="102"/>
    </location>
    <ligand>
        <name>Zn(2+)</name>
        <dbReference type="ChEBI" id="CHEBI:29105"/>
        <label>1</label>
    </ligand>
</feature>
<feature type="binding site" evidence="2">
    <location>
        <position position="107"/>
    </location>
    <ligand>
        <name>Zn(2+)</name>
        <dbReference type="ChEBI" id="CHEBI:29105"/>
        <label>2</label>
    </ligand>
</feature>
<feature type="binding site" evidence="2">
    <location>
        <position position="154"/>
    </location>
    <ligand>
        <name>Zn(2+)</name>
        <dbReference type="ChEBI" id="CHEBI:29105"/>
        <label>3</label>
    </ligand>
</feature>
<feature type="modified residue" description="N-acetylmethionine" evidence="6">
    <location>
        <position position="1"/>
    </location>
</feature>
<feature type="modified residue" description="Deamidated glutamine; partial" evidence="1">
    <location>
        <position position="6"/>
    </location>
</feature>
<feature type="modified residue" description="Phosphoserine" evidence="3">
    <location>
        <position position="45"/>
    </location>
</feature>
<feature type="modified residue" description="Deamidated glutamine; partial" evidence="1">
    <location>
        <position position="50"/>
    </location>
</feature>
<feature type="modified residue" description="N6-acetyllysine" evidence="3">
    <location>
        <position position="70"/>
    </location>
</feature>
<feature type="modified residue" description="Deamidated glutamine; partial" evidence="1">
    <location>
        <position position="90"/>
    </location>
</feature>
<feature type="modified residue" description="N6-acetyllysine" evidence="3">
    <location>
        <position position="99"/>
    </location>
</feature>
<feature type="modified residue" description="Deamidated asparagine; partial" evidence="1">
    <location>
        <position position="101"/>
    </location>
</feature>
<feature type="modified residue" description="Phosphoserine" evidence="2">
    <location>
        <position position="122"/>
    </location>
</feature>
<feature type="modified residue" description="Deamidated asparagine; partial" evidence="1">
    <location>
        <position position="123"/>
    </location>
</feature>
<feature type="glycosylation site" description="O-linked (GlcNAc) serine" evidence="1">
    <location>
        <position position="162"/>
    </location>
</feature>
<comment type="function">
    <text evidence="3">Contributes to the transparency and refractive index of the lens. Acts as a chaperone, preventing aggregation of various proteins under a wide range of stress conditions. Required for the correct formation of lens intermediate filaments as part of a complex composed of BFSP1, BFSP2 and CRYAA.</text>
</comment>
<comment type="subunit">
    <text evidence="2 3">Heteromer composed of three CRYAA and one CRYAB subunits. Inter-subunit bridging via zinc ions enhances stability, which is crucial as there is no protein turn over in the lens. Can also form homodimers and homotetramers (dimers of dimers) which serve as the building blocks of homooligomers (By similarity). Within homooligomers, the zinc-binding motif is created from residues of 3 different molecules. His-100 and Glu-102 from one molecule are ligands of the zinc ion, and His-107 and His-154 residues from additional molecules complete the site with tetrahedral coordination geometry (By similarity). Part of a complex required for lens intermediate filament formation composed of BFSP1, BFSP2 and CRYAA (By similarity).</text>
</comment>
<comment type="subcellular location">
    <subcellularLocation>
        <location evidence="3">Cytoplasm</location>
    </subcellularLocation>
    <subcellularLocation>
        <location evidence="3">Nucleus</location>
    </subcellularLocation>
    <text evidence="3">Translocates to the nucleus during heat shock and resides in sub-nuclear structures known as SC35 speckles or nuclear splicing speckles.</text>
</comment>
<comment type="PTM">
    <text evidence="3">Acetylation at Lys-70 may increase chaperone activity.</text>
</comment>
<comment type="PTM">
    <text evidence="3">Undergoes age-dependent proteolytical cleavage at the C-terminus.</text>
</comment>
<comment type="similarity">
    <text evidence="4">Belongs to the small heat shock protein (HSP20) family.</text>
</comment>
<organism>
    <name type="scientific">Ceratotherium simum</name>
    <name type="common">White rhinoceros</name>
    <name type="synonym">Square-lipped rhinoceros</name>
    <dbReference type="NCBI Taxonomy" id="9807"/>
    <lineage>
        <taxon>Eukaryota</taxon>
        <taxon>Metazoa</taxon>
        <taxon>Chordata</taxon>
        <taxon>Craniata</taxon>
        <taxon>Vertebrata</taxon>
        <taxon>Euteleostomi</taxon>
        <taxon>Mammalia</taxon>
        <taxon>Eutheria</taxon>
        <taxon>Laurasiatheria</taxon>
        <taxon>Perissodactyla</taxon>
        <taxon>Rhinocerotidae</taxon>
        <taxon>Ceratotherium</taxon>
    </lineage>
</organism>
<sequence>MDIAIQHPWFKRTLGPFYPSRLFDQFFGEGLFEYDLLPFLSSTISPYYRQSLFRSVLDSGVSEVRSDRDKFVIFLDVKHFSPEDLTVKVQEDFVEIHGKHNERQDDHGYISREFHRRYRLPSNVDQTALSCSLSADGMLTFSGPKIPSGMDAGHSERAIPVSREEKPSSAPSS</sequence>
<accession>P02479</accession>